<dbReference type="EMBL" id="X63974">
    <property type="protein sequence ID" value="CAA45385.1"/>
    <property type="molecule type" value="Genomic_DNA"/>
</dbReference>
<dbReference type="PIR" id="S18578">
    <property type="entry name" value="S18578"/>
</dbReference>
<dbReference type="RefSeq" id="WP_013068721.1">
    <property type="nucleotide sequence ID" value="NZ_JAOTPJ010000066.1"/>
</dbReference>
<dbReference type="SMR" id="P37735"/>
<dbReference type="TCDB" id="2.A.56.1.1">
    <property type="family name" value="the tripartite atp-independent periplasmic transporter (trap-t) family"/>
</dbReference>
<dbReference type="OMA" id="AFWHNGM"/>
<dbReference type="GO" id="GO:0030288">
    <property type="term" value="C:outer membrane-bounded periplasmic space"/>
    <property type="evidence" value="ECO:0007669"/>
    <property type="project" value="InterPro"/>
</dbReference>
<dbReference type="GO" id="GO:0015740">
    <property type="term" value="P:C4-dicarboxylate transport"/>
    <property type="evidence" value="ECO:0007669"/>
    <property type="project" value="TreeGrafter"/>
</dbReference>
<dbReference type="GO" id="GO:0055085">
    <property type="term" value="P:transmembrane transport"/>
    <property type="evidence" value="ECO:0007669"/>
    <property type="project" value="InterPro"/>
</dbReference>
<dbReference type="CDD" id="cd13674">
    <property type="entry name" value="PBP2_TRAP_SBP_like_1"/>
    <property type="match status" value="1"/>
</dbReference>
<dbReference type="Gene3D" id="3.40.190.170">
    <property type="entry name" value="Bacterial extracellular solute-binding protein, family 7"/>
    <property type="match status" value="1"/>
</dbReference>
<dbReference type="InterPro" id="IPR018389">
    <property type="entry name" value="DctP_fam"/>
</dbReference>
<dbReference type="InterPro" id="IPR004682">
    <property type="entry name" value="TRAP_DctP"/>
</dbReference>
<dbReference type="InterPro" id="IPR038404">
    <property type="entry name" value="TRAP_DctP_sf"/>
</dbReference>
<dbReference type="NCBIfam" id="TIGR00787">
    <property type="entry name" value="dctP"/>
    <property type="match status" value="1"/>
</dbReference>
<dbReference type="NCBIfam" id="NF037995">
    <property type="entry name" value="TRAP_S1"/>
    <property type="match status" value="1"/>
</dbReference>
<dbReference type="PANTHER" id="PTHR33376">
    <property type="match status" value="1"/>
</dbReference>
<dbReference type="PANTHER" id="PTHR33376:SF7">
    <property type="entry name" value="C4-DICARBOXYLATE-BINDING PROTEIN DCTB"/>
    <property type="match status" value="1"/>
</dbReference>
<dbReference type="Pfam" id="PF03480">
    <property type="entry name" value="DctP"/>
    <property type="match status" value="1"/>
</dbReference>
<dbReference type="PIRSF" id="PIRSF006470">
    <property type="entry name" value="DctB"/>
    <property type="match status" value="1"/>
</dbReference>
<feature type="signal peptide" evidence="2">
    <location>
        <begin position="1"/>
        <end position="26"/>
    </location>
</feature>
<feature type="chain" id="PRO_0000031812" description="C4-dicarboxylate-binding periplasmic protein DctP">
    <location>
        <begin position="27"/>
        <end position="333"/>
    </location>
</feature>
<protein>
    <recommendedName>
        <fullName evidence="5">C4-dicarboxylate-binding periplasmic protein DctP</fullName>
    </recommendedName>
</protein>
<name>DCTP_RHOCA</name>
<proteinExistence type="evidence at protein level"/>
<comment type="function">
    <text evidence="1 2 3">Part of the tripartite ATP-independent periplasmic (TRAP) transport system DctPQM involved in C4-dicarboxylates uptake. Binds C4-dicarboxylates such as fumarate, succinate, L-malate and D-malate.</text>
</comment>
<comment type="subunit">
    <text evidence="3">The complex comprises the extracytoplasmic solute receptor protein DctP, and the two transmembrane proteins DctQ and DctM.</text>
</comment>
<comment type="subcellular location">
    <subcellularLocation>
        <location evidence="1">Periplasm</location>
    </subcellularLocation>
</comment>
<comment type="disruption phenotype">
    <text evidence="3">Deletion mutant is unable to transport succinate, and does not grow on D-malate, L-malate, succinate or fumarate as the sole carbon source under aerobic conditions in the dark.</text>
</comment>
<comment type="similarity">
    <text evidence="5">Belongs to the bacterial solute-binding protein 7 family.</text>
</comment>
<accession>P37735</accession>
<keyword id="KW-0903">Direct protein sequencing</keyword>
<keyword id="KW-0574">Periplasm</keyword>
<keyword id="KW-0732">Signal</keyword>
<keyword id="KW-0762">Sugar transport</keyword>
<keyword id="KW-0813">Transport</keyword>
<evidence type="ECO:0000269" key="1">
    <source>
    </source>
</evidence>
<evidence type="ECO:0000269" key="2">
    <source>
    </source>
</evidence>
<evidence type="ECO:0000269" key="3">
    <source>
    </source>
</evidence>
<evidence type="ECO:0000303" key="4">
    <source>
    </source>
</evidence>
<evidence type="ECO:0000305" key="5"/>
<organism>
    <name type="scientific">Rhodobacter capsulatus</name>
    <name type="common">Rhodopseudomonas capsulata</name>
    <dbReference type="NCBI Taxonomy" id="1061"/>
    <lineage>
        <taxon>Bacteria</taxon>
        <taxon>Pseudomonadati</taxon>
        <taxon>Pseudomonadota</taxon>
        <taxon>Alphaproteobacteria</taxon>
        <taxon>Rhodobacterales</taxon>
        <taxon>Rhodobacter group</taxon>
        <taxon>Rhodobacter</taxon>
    </lineage>
</organism>
<gene>
    <name evidence="4" type="primary">dctP</name>
</gene>
<sequence>MLTRRILGALVGATALSLALSVPALAEPIVIKFSHVVAPDTPKGKGAAKFEELAEKYTNGAVDVEVYPNSQLYKDKEELEALQLGAVQMLAPSLAKFGPLGVQDFEVFDLPYIFKDYEALHKVTQGEAGKMLLSKLEAKGITGLAFWDNGFKIMSANTPLTMPDDFLGLKMRIQSSKVLEAEMNALGAVPQVMAFSEVYQALQTGVVDGTENPPSNMFTQKMNEVQKHATVSNHGYLGYAVIVNKQFWDGLPADVRTGLEKAMAESTDYANGIAKEENEKALQAMKDAGTTEFHELTAEERAAWEEVLTPVHDEMAERIGAETIAAVKAATAE</sequence>
<reference key="1">
    <citation type="journal article" date="1991" name="Mol. Microbiol.">
        <title>Purification, characterization and nucleotide sequence of the periplasmic C4-dicarboxylate-binding protein (DctP) from Rhodobacter capsulatus.</title>
        <authorList>
            <person name="Shaw J.G."/>
            <person name="Hamblin M.J."/>
            <person name="Kelly D.J."/>
        </authorList>
    </citation>
    <scope>NUCLEOTIDE SEQUENCE [GENOMIC DNA]</scope>
    <scope>PROTEIN SEQUENCE OF 27-43</scope>
    <scope>FUNCTION</scope>
    <source>
        <strain>ATCC 33303 / B10</strain>
    </source>
</reference>
<reference key="2">
    <citation type="journal article" date="1997" name="J. Bacteriol.">
        <title>TRAP transporters: a new family of periplasmic solute transport systems encoded by the dctPQM genes of Rhodobacter capsulatus and by homologs in diverse gram-negative bacteria.</title>
        <authorList>
            <person name="Forward J.A."/>
            <person name="Behrendt M.C."/>
            <person name="Wyborn N.R."/>
            <person name="Cross R."/>
            <person name="Kelly D.J."/>
        </authorList>
    </citation>
    <scope>NUCLEOTIDE SEQUENCE [GENOMIC DNA]</scope>
    <scope>FUNCTION</scope>
    <scope>SUBUNIT</scope>
    <scope>DISRUPTION PHENOTYPE</scope>
    <scope>NOMENCLATURE</scope>
</reference>
<reference key="3">
    <citation type="journal article" date="1992" name="J. Biol. Chem.">
        <title>The mechanism of ligand binding to the periplasmic C4-dicarboxylate binding protein (DctP) from Rhodobacter capsulatus.</title>
        <authorList>
            <person name="Walmsley A.R."/>
            <person name="Shaw J.G."/>
            <person name="Kelly D.J."/>
        </authorList>
    </citation>
    <scope>FUNCTION</scope>
    <scope>SUBSTRATE-BINDING</scope>
    <scope>SUBCELLULAR LOCATION</scope>
</reference>